<organism>
    <name type="scientific">Mus musculus</name>
    <name type="common">Mouse</name>
    <dbReference type="NCBI Taxonomy" id="10090"/>
    <lineage>
        <taxon>Eukaryota</taxon>
        <taxon>Metazoa</taxon>
        <taxon>Chordata</taxon>
        <taxon>Craniata</taxon>
        <taxon>Vertebrata</taxon>
        <taxon>Euteleostomi</taxon>
        <taxon>Mammalia</taxon>
        <taxon>Eutheria</taxon>
        <taxon>Euarchontoglires</taxon>
        <taxon>Glires</taxon>
        <taxon>Rodentia</taxon>
        <taxon>Myomorpha</taxon>
        <taxon>Muroidea</taxon>
        <taxon>Muridae</taxon>
        <taxon>Murinae</taxon>
        <taxon>Mus</taxon>
        <taxon>Mus</taxon>
    </lineage>
</organism>
<evidence type="ECO:0000250" key="1"/>
<evidence type="ECO:0000255" key="2"/>
<evidence type="ECO:0000269" key="3">
    <source>
    </source>
</evidence>
<evidence type="ECO:0000305" key="4"/>
<sequence>MAGVSPAVFGCPDVTLGRNTAVREVQENITSVDSLTLASSNTDFAFSLYKELVLKNPDENVVFSPFSICTALALLSLGAKSNTLKEILEGLKFNLTETPEPDIHQGFRYLLDLLSQPGNQVQISTGSALFIEKHLQILAEFKEKARALYQAEAFTADFQQPLEATKLINDYVSNHTQGKIKELISDLDKRTLMVLVNYIYFKGKWEMPFDPDDTCKSEFYLDENRSVKVPMMKINNLTTPYFRDEELSCTVVELKYTGNASAMFILPDQGKMQQVEASLQPETLRNWKDSLKPRLINELCLPKFSISTDYSLEHILPELGIRELFSTQADLSAITGTKDLRTSQVVHKAVLDVAETGTEAAAGTGYQNLQCCQGVIYSMKIYFDRPFLMIISDTNTHIALFMAKVSNPESDENFLNVEYAFPQVLEIMPEYRSVCTCCLPCLTRQ</sequence>
<accession>Q80X76</accession>
<accession>B2RT49</accession>
<feature type="chain" id="PRO_0000094097" description="Serine protease inhibitor A3F">
    <location>
        <begin position="1"/>
        <end position="445"/>
    </location>
</feature>
<feature type="region of interest" description="RCL">
    <location>
        <begin position="357"/>
        <end position="382"/>
    </location>
</feature>
<feature type="site" description="Reactive bond" evidence="1">
    <location>
        <begin position="371"/>
        <end position="372"/>
    </location>
</feature>
<feature type="glycosylation site" description="N-linked (GlcNAc...) asparagine" evidence="2">
    <location>
        <position position="28"/>
    </location>
</feature>
<feature type="glycosylation site" description="N-linked (GlcNAc...) asparagine" evidence="2">
    <location>
        <position position="94"/>
    </location>
</feature>
<feature type="glycosylation site" description="N-linked (GlcNAc...) asparagine" evidence="3">
    <location>
        <position position="174"/>
    </location>
</feature>
<feature type="glycosylation site" description="N-linked (GlcNAc...) asparagine" evidence="2">
    <location>
        <position position="259"/>
    </location>
</feature>
<feature type="sequence conflict" description="In Ref. 1; AAH49975." evidence="4" ref="1">
    <original>A</original>
    <variation>T</variation>
    <location>
        <position position="73"/>
    </location>
</feature>
<feature type="sequence conflict" description="In Ref. 1; AAH49975." evidence="4" ref="1">
    <original>H</original>
    <variation>Q</variation>
    <location>
        <position position="175"/>
    </location>
</feature>
<feature type="sequence conflict" description="In Ref. 1; AAH49975." evidence="4" ref="1">
    <original>N</original>
    <variation>D</variation>
    <location>
        <position position="297"/>
    </location>
</feature>
<feature type="sequence conflict" description="In Ref. 1; AAH49975." evidence="4" ref="1">
    <original>S</original>
    <variation>T</variation>
    <location>
        <position position="406"/>
    </location>
</feature>
<feature type="sequence conflict" description="In Ref. 1; AAH49975." evidence="4" ref="1">
    <original>R</original>
    <variation>T</variation>
    <location>
        <position position="444"/>
    </location>
</feature>
<protein>
    <recommendedName>
        <fullName>Serine protease inhibitor A3F</fullName>
        <shortName>Serpin A3F</shortName>
    </recommendedName>
</protein>
<dbReference type="EMBL" id="BC049975">
    <property type="protein sequence ID" value="AAH49975.1"/>
    <property type="status" value="ALT_INIT"/>
    <property type="molecule type" value="mRNA"/>
</dbReference>
<dbReference type="EMBL" id="BC139132">
    <property type="protein sequence ID" value="AAI39133.1"/>
    <property type="molecule type" value="mRNA"/>
</dbReference>
<dbReference type="EMBL" id="BC139133">
    <property type="protein sequence ID" value="AAI39134.1"/>
    <property type="molecule type" value="mRNA"/>
</dbReference>
<dbReference type="CCDS" id="CCDS26149.1"/>
<dbReference type="RefSeq" id="NP_001028507.2">
    <property type="nucleotide sequence ID" value="NM_001033335.3"/>
</dbReference>
<dbReference type="RefSeq" id="NP_001161766.1">
    <property type="nucleotide sequence ID" value="NM_001168294.1"/>
</dbReference>
<dbReference type="RefSeq" id="NP_001161767.1">
    <property type="nucleotide sequence ID" value="NM_001168295.1"/>
</dbReference>
<dbReference type="SMR" id="Q80X76"/>
<dbReference type="FunCoup" id="Q80X76">
    <property type="interactions" value="389"/>
</dbReference>
<dbReference type="STRING" id="10090.ENSMUSP00000113945"/>
<dbReference type="MEROPS" id="I04.045"/>
<dbReference type="MEROPS" id="I04.078"/>
<dbReference type="GlyCosmos" id="Q80X76">
    <property type="glycosylation" value="4 sites, No reported glycans"/>
</dbReference>
<dbReference type="GlyGen" id="Q80X76">
    <property type="glycosylation" value="4 sites, 1 N-linked glycan (1 site)"/>
</dbReference>
<dbReference type="iPTMnet" id="Q80X76"/>
<dbReference type="PhosphoSitePlus" id="Q80X76"/>
<dbReference type="SwissPalm" id="Q80X76"/>
<dbReference type="CPTAC" id="non-CPTAC-4009"/>
<dbReference type="jPOST" id="Q80X76"/>
<dbReference type="PaxDb" id="10090-ENSMUSP00000113945"/>
<dbReference type="ProteomicsDB" id="257333"/>
<dbReference type="Pumba" id="Q80X76"/>
<dbReference type="DNASU" id="238393"/>
<dbReference type="Ensembl" id="ENSMUST00000101080.2">
    <property type="protein sequence ID" value="ENSMUSP00000098641.2"/>
    <property type="gene ID" value="ENSMUSG00000066363.13"/>
</dbReference>
<dbReference type="Ensembl" id="ENSMUST00000121337.8">
    <property type="protein sequence ID" value="ENSMUSP00000113945.2"/>
    <property type="gene ID" value="ENSMUSG00000066363.13"/>
</dbReference>
<dbReference type="Ensembl" id="ENSMUST00000167049.8">
    <property type="protein sequence ID" value="ENSMUSP00000126520.2"/>
    <property type="gene ID" value="ENSMUSG00000066363.13"/>
</dbReference>
<dbReference type="GeneID" id="238393"/>
<dbReference type="KEGG" id="mmu:238393"/>
<dbReference type="UCSC" id="uc007oww.2">
    <property type="organism name" value="mouse"/>
</dbReference>
<dbReference type="AGR" id="MGI:2182838"/>
<dbReference type="CTD" id="238393"/>
<dbReference type="MGI" id="MGI:2182838">
    <property type="gene designation" value="Serpina3f"/>
</dbReference>
<dbReference type="VEuPathDB" id="HostDB:ENSMUSG00000066363"/>
<dbReference type="eggNOG" id="KOG2392">
    <property type="taxonomic scope" value="Eukaryota"/>
</dbReference>
<dbReference type="GeneTree" id="ENSGT00940000154392"/>
<dbReference type="HOGENOM" id="CLU_023330_2_1_1"/>
<dbReference type="InParanoid" id="Q80X76"/>
<dbReference type="OMA" id="FLMVINC"/>
<dbReference type="OrthoDB" id="671595at2759"/>
<dbReference type="PhylomeDB" id="Q80X76"/>
<dbReference type="TreeFam" id="TF343201"/>
<dbReference type="Reactome" id="R-MMU-114608">
    <property type="pathway name" value="Platelet degranulation"/>
</dbReference>
<dbReference type="Reactome" id="R-MMU-6798695">
    <property type="pathway name" value="Neutrophil degranulation"/>
</dbReference>
<dbReference type="BioGRID-ORCS" id="238393">
    <property type="hits" value="4 hits in 78 CRISPR screens"/>
</dbReference>
<dbReference type="ChiTaRS" id="Serpina3f">
    <property type="organism name" value="mouse"/>
</dbReference>
<dbReference type="PRO" id="PR:Q80X76"/>
<dbReference type="Proteomes" id="UP000000589">
    <property type="component" value="Chromosome 12"/>
</dbReference>
<dbReference type="RNAct" id="Q80X76">
    <property type="molecule type" value="protein"/>
</dbReference>
<dbReference type="Bgee" id="ENSMUSG00000066363">
    <property type="expression patterns" value="Expressed in spleen and 19 other cell types or tissues"/>
</dbReference>
<dbReference type="GO" id="GO:0005615">
    <property type="term" value="C:extracellular space"/>
    <property type="evidence" value="ECO:0007669"/>
    <property type="project" value="InterPro"/>
</dbReference>
<dbReference type="GO" id="GO:0004867">
    <property type="term" value="F:serine-type endopeptidase inhibitor activity"/>
    <property type="evidence" value="ECO:0007669"/>
    <property type="project" value="UniProtKB-KW"/>
</dbReference>
<dbReference type="GO" id="GO:0009617">
    <property type="term" value="P:response to bacterium"/>
    <property type="evidence" value="ECO:0000270"/>
    <property type="project" value="MGI"/>
</dbReference>
<dbReference type="GO" id="GO:0034097">
    <property type="term" value="P:response to cytokine"/>
    <property type="evidence" value="ECO:0000314"/>
    <property type="project" value="MGI"/>
</dbReference>
<dbReference type="GO" id="GO:0043434">
    <property type="term" value="P:response to peptide hormone"/>
    <property type="evidence" value="ECO:0000314"/>
    <property type="project" value="MGI"/>
</dbReference>
<dbReference type="CDD" id="cd19551">
    <property type="entry name" value="serpinA3_A1AC"/>
    <property type="match status" value="1"/>
</dbReference>
<dbReference type="FunFam" id="3.30.497.10:FF:000001">
    <property type="entry name" value="Serine protease inhibitor"/>
    <property type="match status" value="1"/>
</dbReference>
<dbReference type="FunFam" id="2.30.39.10:FF:000002">
    <property type="entry name" value="Serpin family D member 1"/>
    <property type="match status" value="1"/>
</dbReference>
<dbReference type="Gene3D" id="2.30.39.10">
    <property type="entry name" value="Alpha-1-antitrypsin, domain 1"/>
    <property type="match status" value="1"/>
</dbReference>
<dbReference type="Gene3D" id="3.30.497.10">
    <property type="entry name" value="Antithrombin, subunit I, domain 2"/>
    <property type="match status" value="1"/>
</dbReference>
<dbReference type="InterPro" id="IPR023795">
    <property type="entry name" value="Serpin_CS"/>
</dbReference>
<dbReference type="InterPro" id="IPR023796">
    <property type="entry name" value="Serpin_dom"/>
</dbReference>
<dbReference type="InterPro" id="IPR000215">
    <property type="entry name" value="Serpin_fam"/>
</dbReference>
<dbReference type="InterPro" id="IPR036186">
    <property type="entry name" value="Serpin_sf"/>
</dbReference>
<dbReference type="InterPro" id="IPR042178">
    <property type="entry name" value="Serpin_sf_1"/>
</dbReference>
<dbReference type="InterPro" id="IPR042185">
    <property type="entry name" value="Serpin_sf_2"/>
</dbReference>
<dbReference type="PANTHER" id="PTHR11461:SF145">
    <property type="entry name" value="ALPHA-1-ANTICHYMOTRYPSIN"/>
    <property type="match status" value="1"/>
</dbReference>
<dbReference type="PANTHER" id="PTHR11461">
    <property type="entry name" value="SERINE PROTEASE INHIBITOR, SERPIN"/>
    <property type="match status" value="1"/>
</dbReference>
<dbReference type="Pfam" id="PF00079">
    <property type="entry name" value="Serpin"/>
    <property type="match status" value="1"/>
</dbReference>
<dbReference type="SMART" id="SM00093">
    <property type="entry name" value="SERPIN"/>
    <property type="match status" value="1"/>
</dbReference>
<dbReference type="SUPFAM" id="SSF56574">
    <property type="entry name" value="Serpins"/>
    <property type="match status" value="1"/>
</dbReference>
<dbReference type="PROSITE" id="PS00284">
    <property type="entry name" value="SERPIN"/>
    <property type="match status" value="1"/>
</dbReference>
<keyword id="KW-0325">Glycoprotein</keyword>
<keyword id="KW-0646">Protease inhibitor</keyword>
<keyword id="KW-1185">Reference proteome</keyword>
<keyword id="KW-0722">Serine protease inhibitor</keyword>
<comment type="domain">
    <text evidence="1">The reactive center loop (RCL) extends out from the body of the protein and directs binding to the target protease. The protease cleaves the serpin at the reactive site within the RCL, establishing a covalent linkage between the serpin reactive site and the protease. The resulting inactive serpin-protease complex is highly stable (By similarity). Variability within the reactive center loop (RCL) sequences of Serpina3 paralogs may determine target protease specificity.</text>
</comment>
<comment type="miscellaneous">
    <text>The single human alpha1-antichymotrypsin gene (SERPINA3) is represented by a cluster of 14 individual murine paralogs.</text>
</comment>
<comment type="similarity">
    <text evidence="4">Belongs to the serpin family.</text>
</comment>
<comment type="sequence caution" evidence="4">
    <conflict type="erroneous initiation">
        <sequence resource="EMBL-CDS" id="AAH49975"/>
    </conflict>
</comment>
<reference key="1">
    <citation type="journal article" date="2004" name="Genome Res.">
        <title>The status, quality, and expansion of the NIH full-length cDNA project: the Mammalian Gene Collection (MGC).</title>
        <authorList>
            <consortium name="The MGC Project Team"/>
        </authorList>
    </citation>
    <scope>NUCLEOTIDE SEQUENCE [LARGE SCALE MRNA]</scope>
    <source>
        <strain>FVB/N</strain>
        <tissue>Salivary gland</tissue>
    </source>
</reference>
<reference key="2">
    <citation type="journal article" date="2003" name="Genomics">
        <title>A review and comparison of the murine alpha1-antitrypsin and alpha1-antichymotrypsin multigene clusters with the human clade A serpins.</title>
        <authorList>
            <person name="Forsyth S."/>
            <person name="Horvath A."/>
            <person name="Coughlin P."/>
        </authorList>
    </citation>
    <scope>GENE FAMILY</scope>
    <scope>NOMENCLATURE</scope>
</reference>
<reference key="3">
    <citation type="journal article" date="2004" name="J. Mol. Evol.">
        <title>Expression patterns of murine antichymotrypsin-like genes reflect evolutionary divergence at the Serpina3 locus.</title>
        <authorList>
            <person name="Horvath A.J."/>
            <person name="Forsyth S.L."/>
            <person name="Coughlin P.B."/>
        </authorList>
    </citation>
    <scope>REGION RCL</scope>
</reference>
<reference key="4">
    <citation type="journal article" date="2006" name="J. Proteome Res.">
        <title>Proteome-wide characterization of N-glycosylation events by diagonal chromatography.</title>
        <authorList>
            <person name="Ghesquiere B."/>
            <person name="Van Damme J."/>
            <person name="Martens L."/>
            <person name="Vandekerckhove J."/>
            <person name="Gevaert K."/>
        </authorList>
    </citation>
    <scope>GLYCOSYLATION [LARGE SCALE ANALYSIS] AT ASN-174</scope>
    <source>
        <strain>C57BL/6J</strain>
        <tissue>Plasma</tissue>
    </source>
</reference>
<name>SPA3F_MOUSE</name>
<gene>
    <name type="primary">Serpina3f</name>
</gene>
<proteinExistence type="evidence at protein level"/>